<sequence>MESQRNILLIGLLFVSFLLWQQWQADKAPKPVATESSLVANAANSHSADVPEADTGVPAAVTATSKLITVKTDQLDVQINPIGGDIVFAALVSHKMEQDKDQPFVLLEQTKDFTYIAQSGLIGRDGIDSSAKGRAAFSTAATEYTLAEGQDTLEVPLTYVADNGVTYTKVFVFHRGKFNVDVDYKINNTSAAPLQVQMYGQIKQTIKPSESSMVMPTYRGGAFSTQDVRYEKYKFDDMAKSNLNQATLGGWAAMLQHYFVSAWIPPATDSNTIFSSVSAGGLANIGFRGAVYDIAPGATQEISSQFYVGPKDQKALSAISDTLNLVVDYGFLWWLAVPIHWLLMFYQSFVGNWGMAIILITLTVRGLLFPLTKAQYTSMAKMRNLQPKLTDLKERFGDDRQKMGQAMMELYKKEKVNPMGGCLPIILQMPIFIALYWVLLESFELRHAPFMLWIHDLSVQDPYYILPLLMGVSMFVMQKMQPIAPTMDPMQVKMMQWMPVIFTVFFLWFPAGLVLYWLVGNIVAITQQKIIYAGLAKKGLK</sequence>
<protein>
    <recommendedName>
        <fullName evidence="1">Membrane protein insertase YidC</fullName>
    </recommendedName>
    <alternativeName>
        <fullName evidence="1">Foldase YidC</fullName>
    </alternativeName>
    <alternativeName>
        <fullName evidence="1">Membrane integrase YidC</fullName>
    </alternativeName>
    <alternativeName>
        <fullName evidence="1">Membrane protein YidC</fullName>
    </alternativeName>
</protein>
<evidence type="ECO:0000255" key="1">
    <source>
        <dbReference type="HAMAP-Rule" id="MF_01810"/>
    </source>
</evidence>
<accession>B8EDW5</accession>
<feature type="chain" id="PRO_1000187705" description="Membrane protein insertase YidC">
    <location>
        <begin position="1"/>
        <end position="541"/>
    </location>
</feature>
<feature type="transmembrane region" description="Helical" evidence="1">
    <location>
        <begin position="6"/>
        <end position="26"/>
    </location>
</feature>
<feature type="transmembrane region" description="Helical" evidence="1">
    <location>
        <begin position="325"/>
        <end position="345"/>
    </location>
</feature>
<feature type="transmembrane region" description="Helical" evidence="1">
    <location>
        <begin position="349"/>
        <end position="369"/>
    </location>
</feature>
<feature type="transmembrane region" description="Helical" evidence="1">
    <location>
        <begin position="420"/>
        <end position="440"/>
    </location>
</feature>
<feature type="transmembrane region" description="Helical" evidence="1">
    <location>
        <begin position="457"/>
        <end position="477"/>
    </location>
</feature>
<feature type="transmembrane region" description="Helical" evidence="1">
    <location>
        <begin position="500"/>
        <end position="520"/>
    </location>
</feature>
<keyword id="KW-0997">Cell inner membrane</keyword>
<keyword id="KW-1003">Cell membrane</keyword>
<keyword id="KW-0143">Chaperone</keyword>
<keyword id="KW-0472">Membrane</keyword>
<keyword id="KW-0653">Protein transport</keyword>
<keyword id="KW-0812">Transmembrane</keyword>
<keyword id="KW-1133">Transmembrane helix</keyword>
<keyword id="KW-0813">Transport</keyword>
<gene>
    <name evidence="1" type="primary">yidC</name>
    <name type="ordered locus">Sbal223_4325</name>
</gene>
<organism>
    <name type="scientific">Shewanella baltica (strain OS223)</name>
    <dbReference type="NCBI Taxonomy" id="407976"/>
    <lineage>
        <taxon>Bacteria</taxon>
        <taxon>Pseudomonadati</taxon>
        <taxon>Pseudomonadota</taxon>
        <taxon>Gammaproteobacteria</taxon>
        <taxon>Alteromonadales</taxon>
        <taxon>Shewanellaceae</taxon>
        <taxon>Shewanella</taxon>
    </lineage>
</organism>
<reference key="1">
    <citation type="submission" date="2008-12" db="EMBL/GenBank/DDBJ databases">
        <title>Complete sequence of chromosome of Shewanella baltica OS223.</title>
        <authorList>
            <consortium name="US DOE Joint Genome Institute"/>
            <person name="Lucas S."/>
            <person name="Copeland A."/>
            <person name="Lapidus A."/>
            <person name="Glavina del Rio T."/>
            <person name="Dalin E."/>
            <person name="Tice H."/>
            <person name="Bruce D."/>
            <person name="Goodwin L."/>
            <person name="Pitluck S."/>
            <person name="Chertkov O."/>
            <person name="Meincke L."/>
            <person name="Brettin T."/>
            <person name="Detter J.C."/>
            <person name="Han C."/>
            <person name="Kuske C.R."/>
            <person name="Larimer F."/>
            <person name="Land M."/>
            <person name="Hauser L."/>
            <person name="Kyrpides N."/>
            <person name="Ovchinnikova G."/>
            <person name="Brettar I."/>
            <person name="Rodrigues J."/>
            <person name="Konstantinidis K."/>
            <person name="Tiedje J."/>
        </authorList>
    </citation>
    <scope>NUCLEOTIDE SEQUENCE [LARGE SCALE GENOMIC DNA]</scope>
    <source>
        <strain>OS223</strain>
    </source>
</reference>
<proteinExistence type="inferred from homology"/>
<comment type="function">
    <text evidence="1">Required for the insertion and/or proper folding and/or complex formation of integral membrane proteins into the membrane. Involved in integration of membrane proteins that insert both dependently and independently of the Sec translocase complex, as well as at least some lipoproteins. Aids folding of multispanning membrane proteins.</text>
</comment>
<comment type="subunit">
    <text evidence="1">Interacts with the Sec translocase complex via SecD. Specifically interacts with transmembrane segments of nascent integral membrane proteins during membrane integration.</text>
</comment>
<comment type="subcellular location">
    <subcellularLocation>
        <location evidence="1">Cell inner membrane</location>
        <topology evidence="1">Multi-pass membrane protein</topology>
    </subcellularLocation>
</comment>
<comment type="similarity">
    <text evidence="1">Belongs to the OXA1/ALB3/YidC family. Type 1 subfamily.</text>
</comment>
<name>YIDC_SHEB2</name>
<dbReference type="EMBL" id="CP001252">
    <property type="protein sequence ID" value="ACK48791.1"/>
    <property type="molecule type" value="Genomic_DNA"/>
</dbReference>
<dbReference type="RefSeq" id="WP_006083830.1">
    <property type="nucleotide sequence ID" value="NC_011663.1"/>
</dbReference>
<dbReference type="SMR" id="B8EDW5"/>
<dbReference type="KEGG" id="sbp:Sbal223_4325"/>
<dbReference type="HOGENOM" id="CLU_016535_3_0_6"/>
<dbReference type="Proteomes" id="UP000002507">
    <property type="component" value="Chromosome"/>
</dbReference>
<dbReference type="GO" id="GO:0005886">
    <property type="term" value="C:plasma membrane"/>
    <property type="evidence" value="ECO:0007669"/>
    <property type="project" value="UniProtKB-SubCell"/>
</dbReference>
<dbReference type="GO" id="GO:0032977">
    <property type="term" value="F:membrane insertase activity"/>
    <property type="evidence" value="ECO:0007669"/>
    <property type="project" value="InterPro"/>
</dbReference>
<dbReference type="GO" id="GO:0051205">
    <property type="term" value="P:protein insertion into membrane"/>
    <property type="evidence" value="ECO:0007669"/>
    <property type="project" value="TreeGrafter"/>
</dbReference>
<dbReference type="GO" id="GO:0015031">
    <property type="term" value="P:protein transport"/>
    <property type="evidence" value="ECO:0007669"/>
    <property type="project" value="UniProtKB-KW"/>
</dbReference>
<dbReference type="CDD" id="cd20070">
    <property type="entry name" value="5TM_YidC_Alb3"/>
    <property type="match status" value="1"/>
</dbReference>
<dbReference type="CDD" id="cd19961">
    <property type="entry name" value="EcYidC-like_peri"/>
    <property type="match status" value="1"/>
</dbReference>
<dbReference type="FunFam" id="2.70.98.90:FF:000004">
    <property type="entry name" value="Membrane protein insertase YidC"/>
    <property type="match status" value="1"/>
</dbReference>
<dbReference type="Gene3D" id="2.70.98.90">
    <property type="match status" value="1"/>
</dbReference>
<dbReference type="HAMAP" id="MF_01810">
    <property type="entry name" value="YidC_type1"/>
    <property type="match status" value="1"/>
</dbReference>
<dbReference type="InterPro" id="IPR019998">
    <property type="entry name" value="Membr_insert_YidC"/>
</dbReference>
<dbReference type="InterPro" id="IPR028053">
    <property type="entry name" value="Membr_insert_YidC_N"/>
</dbReference>
<dbReference type="InterPro" id="IPR001708">
    <property type="entry name" value="YidC/ALB3/OXA1/COX18"/>
</dbReference>
<dbReference type="InterPro" id="IPR028055">
    <property type="entry name" value="YidC/Oxa/ALB_C"/>
</dbReference>
<dbReference type="InterPro" id="IPR047196">
    <property type="entry name" value="YidC_ALB_C"/>
</dbReference>
<dbReference type="InterPro" id="IPR038221">
    <property type="entry name" value="YidC_periplasmic_sf"/>
</dbReference>
<dbReference type="NCBIfam" id="NF002351">
    <property type="entry name" value="PRK01318.1-1"/>
    <property type="match status" value="1"/>
</dbReference>
<dbReference type="NCBIfam" id="NF002352">
    <property type="entry name" value="PRK01318.1-3"/>
    <property type="match status" value="1"/>
</dbReference>
<dbReference type="NCBIfam" id="TIGR03593">
    <property type="entry name" value="yidC_nterm"/>
    <property type="match status" value="1"/>
</dbReference>
<dbReference type="NCBIfam" id="TIGR03592">
    <property type="entry name" value="yidC_oxa1_cterm"/>
    <property type="match status" value="1"/>
</dbReference>
<dbReference type="PANTHER" id="PTHR12428:SF65">
    <property type="entry name" value="CYTOCHROME C OXIDASE ASSEMBLY PROTEIN COX18, MITOCHONDRIAL"/>
    <property type="match status" value="1"/>
</dbReference>
<dbReference type="PANTHER" id="PTHR12428">
    <property type="entry name" value="OXA1"/>
    <property type="match status" value="1"/>
</dbReference>
<dbReference type="Pfam" id="PF02096">
    <property type="entry name" value="60KD_IMP"/>
    <property type="match status" value="1"/>
</dbReference>
<dbReference type="Pfam" id="PF14849">
    <property type="entry name" value="YidC_periplas"/>
    <property type="match status" value="1"/>
</dbReference>
<dbReference type="PRINTS" id="PR00701">
    <property type="entry name" value="60KDINNERMP"/>
</dbReference>
<dbReference type="PRINTS" id="PR01900">
    <property type="entry name" value="YIDCPROTEIN"/>
</dbReference>